<dbReference type="EMBL" id="FN394216">
    <property type="protein sequence ID" value="CAY86585.1"/>
    <property type="molecule type" value="Genomic_DNA"/>
</dbReference>
<dbReference type="HOGENOM" id="CLU_085105_1_0_1"/>
<dbReference type="OrthoDB" id="36835at4893"/>
<dbReference type="Proteomes" id="UP000000286">
    <property type="component" value="Chromosome XV, Scaffold EC1118_1O4"/>
</dbReference>
<dbReference type="GO" id="GO:0005739">
    <property type="term" value="C:mitochondrion"/>
    <property type="evidence" value="ECO:0007669"/>
    <property type="project" value="UniProtKB-SubCell"/>
</dbReference>
<dbReference type="InterPro" id="IPR018828">
    <property type="entry name" value="RRG7"/>
</dbReference>
<dbReference type="PANTHER" id="PTHR28133">
    <property type="entry name" value="REQUIRED FOR RESPIRATORY GROWTH PROTEIN 7, MITOCHONDRIAL"/>
    <property type="match status" value="1"/>
</dbReference>
<dbReference type="PANTHER" id="PTHR28133:SF1">
    <property type="entry name" value="REQUIRED FOR RESPIRATORY GROWTH PROTEIN 7, MITOCHONDRIAL"/>
    <property type="match status" value="1"/>
</dbReference>
<dbReference type="Pfam" id="PF10356">
    <property type="entry name" value="RRG7"/>
    <property type="match status" value="1"/>
</dbReference>
<feature type="chain" id="PRO_0000405459" description="Required for respiratory growth protein 7, mitochondrial">
    <location>
        <begin position="1"/>
        <end position="242"/>
    </location>
</feature>
<organism>
    <name type="scientific">Saccharomyces cerevisiae (strain Lalvin EC1118 / Prise de mousse)</name>
    <name type="common">Baker's yeast</name>
    <dbReference type="NCBI Taxonomy" id="643680"/>
    <lineage>
        <taxon>Eukaryota</taxon>
        <taxon>Fungi</taxon>
        <taxon>Dikarya</taxon>
        <taxon>Ascomycota</taxon>
        <taxon>Saccharomycotina</taxon>
        <taxon>Saccharomycetes</taxon>
        <taxon>Saccharomycetales</taxon>
        <taxon>Saccharomycetaceae</taxon>
        <taxon>Saccharomyces</taxon>
    </lineage>
</organism>
<name>RRG7_YEAS8</name>
<keyword id="KW-0496">Mitochondrion</keyword>
<reference key="1">
    <citation type="journal article" date="2009" name="Proc. Natl. Acad. Sci. U.S.A.">
        <title>Eukaryote-to-eukaryote gene transfer events revealed by the genome sequence of the wine yeast Saccharomyces cerevisiae EC1118.</title>
        <authorList>
            <person name="Novo M."/>
            <person name="Bigey F."/>
            <person name="Beyne E."/>
            <person name="Galeote V."/>
            <person name="Gavory F."/>
            <person name="Mallet S."/>
            <person name="Cambon B."/>
            <person name="Legras J.-L."/>
            <person name="Wincker P."/>
            <person name="Casaregola S."/>
            <person name="Dequin S."/>
        </authorList>
    </citation>
    <scope>NUCLEOTIDE SEQUENCE [LARGE SCALE GENOMIC DNA]</scope>
    <source>
        <strain>Lalvin EC1118 / Prise de mousse</strain>
    </source>
</reference>
<protein>
    <recommendedName>
        <fullName>Required for respiratory growth protein 7, mitochondrial</fullName>
    </recommendedName>
</protein>
<comment type="subcellular location">
    <subcellularLocation>
        <location evidence="1">Mitochondrion</location>
    </subcellularLocation>
</comment>
<comment type="similarity">
    <text evidence="2">Belongs to the RRG7 family.</text>
</comment>
<evidence type="ECO:0000250" key="1"/>
<evidence type="ECO:0000305" key="2"/>
<accession>C8ZH56</accession>
<proteinExistence type="inferred from homology"/>
<gene>
    <name type="primary">RRG7</name>
    <name type="ORF">EC1118_1O4_5424g</name>
</gene>
<sequence length="242" mass="27967">MIKNYLGRRWLNNPAIQAYVKQNAAVAHSTVFQGNLYEYTVMRELSEKLRMTKLRKTGGAHDGGVDIKGSWPVDDIYWKISSLMPNLEMASNIKRTNSQNGFVLKPLKYRIIDHTFEPLKVLVQCKAFTKSKLSPREFRELVGTFTSLVSHSQRNKTVCIMCSPHMLTKDTLNLINNITLPLIYLRVEMLKEKTDGHFDLINSGKLINYYENSYASTLMQDCKISEWLKLKLYKNSDFNSEK</sequence>